<evidence type="ECO:0000250" key="1"/>
<evidence type="ECO:0000255" key="2">
    <source>
        <dbReference type="PROSITE-ProRule" id="PRU00261"/>
    </source>
</evidence>
<evidence type="ECO:0000269" key="3">
    <source>
    </source>
</evidence>
<evidence type="ECO:0000269" key="4">
    <source>
    </source>
</evidence>
<evidence type="ECO:0007829" key="5">
    <source>
        <dbReference type="PDB" id="1K7U"/>
    </source>
</evidence>
<evidence type="ECO:0007829" key="6">
    <source>
        <dbReference type="PDB" id="1WGT"/>
    </source>
</evidence>
<evidence type="ECO:0007829" key="7">
    <source>
        <dbReference type="PDB" id="2X52"/>
    </source>
</evidence>
<proteinExistence type="evidence at protein level"/>
<organism>
    <name type="scientific">Triticum aestivum</name>
    <name type="common">Wheat</name>
    <dbReference type="NCBI Taxonomy" id="4565"/>
    <lineage>
        <taxon>Eukaryota</taxon>
        <taxon>Viridiplantae</taxon>
        <taxon>Streptophyta</taxon>
        <taxon>Embryophyta</taxon>
        <taxon>Tracheophyta</taxon>
        <taxon>Spermatophyta</taxon>
        <taxon>Magnoliopsida</taxon>
        <taxon>Liliopsida</taxon>
        <taxon>Poales</taxon>
        <taxon>Poaceae</taxon>
        <taxon>BOP clade</taxon>
        <taxon>Pooideae</taxon>
        <taxon>Triticodae</taxon>
        <taxon>Triticeae</taxon>
        <taxon>Triticinae</taxon>
        <taxon>Triticum</taxon>
    </lineage>
</organism>
<keyword id="KW-0002">3D-structure</keyword>
<keyword id="KW-0147">Chitin-binding</keyword>
<keyword id="KW-1015">Disulfide bond</keyword>
<keyword id="KW-0325">Glycoprotein</keyword>
<keyword id="KW-0430">Lectin</keyword>
<keyword id="KW-0873">Pyrrolidone carboxylic acid</keyword>
<keyword id="KW-1185">Reference proteome</keyword>
<keyword id="KW-0677">Repeat</keyword>
<dbReference type="EMBL" id="J02961">
    <property type="protein sequence ID" value="AAA34257.1"/>
    <property type="molecule type" value="mRNA"/>
</dbReference>
<dbReference type="PIR" id="A28401">
    <property type="entry name" value="A28401"/>
</dbReference>
<dbReference type="PDB" id="1K7T">
    <property type="method" value="X-ray"/>
    <property type="resolution" value="2.40 A"/>
    <property type="chains" value="A/B=1-186"/>
</dbReference>
<dbReference type="PDB" id="1K7U">
    <property type="method" value="X-ray"/>
    <property type="resolution" value="2.20 A"/>
    <property type="chains" value="A/B=1-186"/>
</dbReference>
<dbReference type="PDB" id="1K7V">
    <property type="method" value="X-ray"/>
    <property type="resolution" value="2.20 A"/>
    <property type="chains" value="A/B=2-186"/>
</dbReference>
<dbReference type="PDB" id="1WGT">
    <property type="method" value="X-ray"/>
    <property type="resolution" value="1.90 A"/>
    <property type="chains" value="A/B=2-186"/>
</dbReference>
<dbReference type="PDB" id="2X52">
    <property type="method" value="X-ray"/>
    <property type="resolution" value="1.70 A"/>
    <property type="chains" value="A/B=2-171"/>
</dbReference>
<dbReference type="PDB" id="8VU8">
    <property type="method" value="NMR"/>
    <property type="chains" value="A=129-171"/>
</dbReference>
<dbReference type="PDBsum" id="1K7T"/>
<dbReference type="PDBsum" id="1K7U"/>
<dbReference type="PDBsum" id="1K7V"/>
<dbReference type="PDBsum" id="1WGT"/>
<dbReference type="PDBsum" id="2X52"/>
<dbReference type="PDBsum" id="8VU8"/>
<dbReference type="SMR" id="P10969"/>
<dbReference type="STRING" id="4565.P10969"/>
<dbReference type="Allergome" id="650">
    <property type="allergen name" value="Tri a 18"/>
</dbReference>
<dbReference type="CAZy" id="CBM18">
    <property type="family name" value="Carbohydrate-Binding Module Family 18"/>
</dbReference>
<dbReference type="UniLectin" id="P10969"/>
<dbReference type="EvolutionaryTrace" id="P10969"/>
<dbReference type="PRO" id="PR:P10969"/>
<dbReference type="Proteomes" id="UP000019116">
    <property type="component" value="Unplaced"/>
</dbReference>
<dbReference type="ExpressionAtlas" id="P10969">
    <property type="expression patterns" value="baseline"/>
</dbReference>
<dbReference type="GO" id="GO:0030246">
    <property type="term" value="F:carbohydrate binding"/>
    <property type="evidence" value="ECO:0007669"/>
    <property type="project" value="UniProtKB-KW"/>
</dbReference>
<dbReference type="GO" id="GO:0008061">
    <property type="term" value="F:chitin binding"/>
    <property type="evidence" value="ECO:0007669"/>
    <property type="project" value="UniProtKB-KW"/>
</dbReference>
<dbReference type="CDD" id="cd00035">
    <property type="entry name" value="ChtBD1"/>
    <property type="match status" value="4"/>
</dbReference>
<dbReference type="FunFam" id="3.30.60.10:FF:000006">
    <property type="entry name" value="Agglutinin isolectin 1"/>
    <property type="match status" value="2"/>
</dbReference>
<dbReference type="Gene3D" id="3.30.60.10">
    <property type="entry name" value="Endochitinase-like"/>
    <property type="match status" value="4"/>
</dbReference>
<dbReference type="InterPro" id="IPR001002">
    <property type="entry name" value="Chitin-bd_1"/>
</dbReference>
<dbReference type="InterPro" id="IPR018371">
    <property type="entry name" value="Chitin-binding_1_CS"/>
</dbReference>
<dbReference type="InterPro" id="IPR036861">
    <property type="entry name" value="Endochitinase-like_sf"/>
</dbReference>
<dbReference type="PANTHER" id="PTHR47849">
    <property type="entry name" value="CHITIN-BINDING LECTIN 1"/>
    <property type="match status" value="1"/>
</dbReference>
<dbReference type="PANTHER" id="PTHR47849:SF11">
    <property type="entry name" value="CHITIN-BINDING TYPE-1 DOMAIN-CONTAINING PROTEIN"/>
    <property type="match status" value="1"/>
</dbReference>
<dbReference type="Pfam" id="PF00187">
    <property type="entry name" value="Chitin_bind_1"/>
    <property type="match status" value="4"/>
</dbReference>
<dbReference type="PRINTS" id="PR00451">
    <property type="entry name" value="CHITINBINDNG"/>
</dbReference>
<dbReference type="SMART" id="SM00270">
    <property type="entry name" value="ChtBD1"/>
    <property type="match status" value="4"/>
</dbReference>
<dbReference type="SUPFAM" id="SSF57016">
    <property type="entry name" value="Plant lectins/antimicrobial peptides"/>
    <property type="match status" value="4"/>
</dbReference>
<dbReference type="PROSITE" id="PS00026">
    <property type="entry name" value="CHIT_BIND_I_1"/>
    <property type="match status" value="4"/>
</dbReference>
<dbReference type="PROSITE" id="PS50941">
    <property type="entry name" value="CHIT_BIND_I_2"/>
    <property type="match status" value="4"/>
</dbReference>
<feature type="chain" id="PRO_0000005259" description="Agglutinin isolectin 3">
    <location>
        <begin position="1"/>
        <end position="171"/>
    </location>
</feature>
<feature type="propeptide" id="PRO_0000005260">
    <location>
        <begin position="172"/>
        <end position="186"/>
    </location>
</feature>
<feature type="domain" description="Chitin-binding type-1 1" evidence="2">
    <location>
        <begin position="1"/>
        <end position="42"/>
    </location>
</feature>
<feature type="domain" description="Chitin-binding type-1 2" evidence="2">
    <location>
        <begin position="43"/>
        <end position="85"/>
    </location>
</feature>
<feature type="domain" description="Chitin-binding type-1 3" evidence="2">
    <location>
        <begin position="86"/>
        <end position="128"/>
    </location>
</feature>
<feature type="domain" description="Chitin-binding type-1 4" evidence="2">
    <location>
        <begin position="129"/>
        <end position="171"/>
    </location>
</feature>
<feature type="binding site" evidence="1">
    <location>
        <begin position="10"/>
        <end position="12"/>
    </location>
    <ligand>
        <name>substrate</name>
    </ligand>
</feature>
<feature type="binding site">
    <location>
        <begin position="62"/>
        <end position="73"/>
    </location>
    <ligand>
        <name>substrate</name>
    </ligand>
</feature>
<feature type="binding site">
    <location>
        <begin position="114"/>
        <end position="115"/>
    </location>
    <ligand>
        <name>substrate</name>
    </ligand>
</feature>
<feature type="modified residue" description="Pyrrolidone carboxylic acid" evidence="4">
    <location>
        <position position="1"/>
    </location>
</feature>
<feature type="glycosylation site" description="N-linked (GlcNAc...) asparagine">
    <location>
        <position position="180"/>
    </location>
</feature>
<feature type="disulfide bond">
    <location>
        <begin position="3"/>
        <end position="18"/>
    </location>
</feature>
<feature type="disulfide bond">
    <location>
        <begin position="12"/>
        <end position="24"/>
    </location>
</feature>
<feature type="disulfide bond">
    <location>
        <begin position="17"/>
        <end position="31"/>
    </location>
</feature>
<feature type="disulfide bond">
    <location>
        <begin position="35"/>
        <end position="40"/>
    </location>
</feature>
<feature type="disulfide bond">
    <location>
        <begin position="46"/>
        <end position="61"/>
    </location>
</feature>
<feature type="disulfide bond">
    <location>
        <begin position="55"/>
        <end position="67"/>
    </location>
</feature>
<feature type="disulfide bond">
    <location>
        <begin position="60"/>
        <end position="74"/>
    </location>
</feature>
<feature type="disulfide bond">
    <location>
        <begin position="78"/>
        <end position="83"/>
    </location>
</feature>
<feature type="disulfide bond">
    <location>
        <begin position="89"/>
        <end position="104"/>
    </location>
</feature>
<feature type="disulfide bond">
    <location>
        <begin position="98"/>
        <end position="110"/>
    </location>
</feature>
<feature type="disulfide bond">
    <location>
        <begin position="103"/>
        <end position="117"/>
    </location>
</feature>
<feature type="disulfide bond">
    <location>
        <begin position="121"/>
        <end position="126"/>
    </location>
</feature>
<feature type="disulfide bond">
    <location>
        <begin position="132"/>
        <end position="147"/>
    </location>
</feature>
<feature type="disulfide bond">
    <location>
        <begin position="141"/>
        <end position="153"/>
    </location>
</feature>
<feature type="disulfide bond">
    <location>
        <begin position="146"/>
        <end position="160"/>
    </location>
</feature>
<feature type="disulfide bond">
    <location>
        <begin position="164"/>
        <end position="169"/>
    </location>
</feature>
<feature type="non-terminal residue">
    <location>
        <position position="1"/>
    </location>
</feature>
<feature type="helix" evidence="7">
    <location>
        <begin position="4"/>
        <end position="6"/>
    </location>
</feature>
<feature type="turn" evidence="7">
    <location>
        <begin position="7"/>
        <end position="9"/>
    </location>
</feature>
<feature type="helix" evidence="7">
    <location>
        <begin position="13"/>
        <end position="15"/>
    </location>
</feature>
<feature type="strand" evidence="7">
    <location>
        <begin position="24"/>
        <end position="27"/>
    </location>
</feature>
<feature type="helix" evidence="7">
    <location>
        <begin position="28"/>
        <end position="31"/>
    </location>
</feature>
<feature type="strand" evidence="5">
    <location>
        <begin position="32"/>
        <end position="34"/>
    </location>
</feature>
<feature type="strand" evidence="7">
    <location>
        <begin position="37"/>
        <end position="39"/>
    </location>
</feature>
<feature type="helix" evidence="7">
    <location>
        <begin position="48"/>
        <end position="50"/>
    </location>
</feature>
<feature type="helix" evidence="7">
    <location>
        <begin position="56"/>
        <end position="58"/>
    </location>
</feature>
<feature type="strand" evidence="7">
    <location>
        <begin position="65"/>
        <end position="70"/>
    </location>
</feature>
<feature type="helix" evidence="7">
    <location>
        <begin position="71"/>
        <end position="74"/>
    </location>
</feature>
<feature type="strand" evidence="7">
    <location>
        <begin position="80"/>
        <end position="82"/>
    </location>
</feature>
<feature type="helix" evidence="7">
    <location>
        <begin position="90"/>
        <end position="93"/>
    </location>
</feature>
<feature type="helix" evidence="6">
    <location>
        <begin position="99"/>
        <end position="101"/>
    </location>
</feature>
<feature type="strand" evidence="7">
    <location>
        <begin position="108"/>
        <end position="113"/>
    </location>
</feature>
<feature type="helix" evidence="7">
    <location>
        <begin position="114"/>
        <end position="117"/>
    </location>
</feature>
<feature type="strand" evidence="7">
    <location>
        <begin position="123"/>
        <end position="125"/>
    </location>
</feature>
<feature type="helix" evidence="7">
    <location>
        <begin position="133"/>
        <end position="135"/>
    </location>
</feature>
<feature type="turn" evidence="7">
    <location>
        <begin position="136"/>
        <end position="138"/>
    </location>
</feature>
<feature type="helix" evidence="7">
    <location>
        <begin position="142"/>
        <end position="144"/>
    </location>
</feature>
<feature type="strand" evidence="7">
    <location>
        <begin position="153"/>
        <end position="156"/>
    </location>
</feature>
<feature type="helix" evidence="7">
    <location>
        <begin position="157"/>
        <end position="160"/>
    </location>
</feature>
<feature type="strand" evidence="7">
    <location>
        <begin position="166"/>
        <end position="168"/>
    </location>
</feature>
<reference key="1">
    <citation type="journal article" date="1987" name="Proc. Natl. Acad. Sci. U.S.A.">
        <title>Isolation and characterization of a cDNA clone encoding wheat germ agglutinin.</title>
        <authorList>
            <person name="Raikhel N.V."/>
            <person name="Wilkins T.A."/>
        </authorList>
    </citation>
    <scope>NUCLEOTIDE SEQUENCE [MRNA]</scope>
</reference>
<reference key="2">
    <citation type="journal article" date="1995" name="Acta Crystallogr. D">
        <title>X-ray structure of wheat germ agglutinin isolectin 3.</title>
        <authorList>
            <person name="Harata K."/>
            <person name="Nagahora H."/>
            <person name="Jigami Y."/>
        </authorList>
    </citation>
    <scope>X-RAY CRYSTALLOGRAPHY (1.9 ANGSTROMS)</scope>
    <scope>PYROGLUTAMATE FORMATION AT GLN-1</scope>
    <scope>SUBUNIT</scope>
</reference>
<reference key="3">
    <citation type="journal article" date="2002" name="Biochim. Biophys. Acta">
        <title>Interactions of wheat-germ agglutinin with GlcNAc beta 1,6Gal sequence.</title>
        <authorList>
            <person name="Muraki M."/>
            <person name="Ishimura M."/>
            <person name="Harata K."/>
        </authorList>
    </citation>
    <scope>X-RAY CRYSTALLOGRAPHY (2.2 ANGSTROMS) IN COMPLEX WITH SUBSTRATES</scope>
</reference>
<comment type="function">
    <text>N-acetyl-D-glucosamine / N-acetyl-D-neuraminic acid binding lectin.</text>
</comment>
<comment type="subunit">
    <text evidence="3 4">Homodimer, u-shaped.</text>
</comment>
<comment type="miscellaneous">
    <text>The 4 sites proposed for binding to carbohydrates (N-acetyl-D-glucosamine) of receptor molecules are on the surface of the agglutinin molecule.</text>
</comment>
<name>AGI3_WHEAT</name>
<protein>
    <recommendedName>
        <fullName>Agglutinin isolectin 3</fullName>
    </recommendedName>
    <alternativeName>
        <fullName>WGA3</fullName>
    </alternativeName>
</protein>
<accession>P10969</accession>
<sequence>QRCGEQGSGMECPNNLCCSQYGYCGMGGDYCGKGCQNGACWTSKRCGSQAGGKTCPNNHCCSQYGHCGFGAEYCGAGCQGGPCRADIKCGSQAGGKLCPNNLCCSQWGYCGLGSEFCGEGCQNGACSTDKPCGKDAGGRVCTNNYCCSKWGSCGIGPGYCGAGCQSGGCDGVFAEAIATNSTLLAE</sequence>